<gene>
    <name type="primary">ppc</name>
    <name type="synonym">ppcA</name>
    <name type="ordered locus">MexAM1_META1p1732</name>
</gene>
<feature type="chain" id="PRO_0000166599" description="Phosphoenolpyruvate carboxylase">
    <location>
        <begin position="1"/>
        <end position="922"/>
    </location>
</feature>
<feature type="region of interest" description="Disordered" evidence="3">
    <location>
        <begin position="1"/>
        <end position="20"/>
    </location>
</feature>
<feature type="active site" evidence="2">
    <location>
        <position position="142"/>
    </location>
</feature>
<feature type="active site" evidence="2">
    <location>
        <position position="581"/>
    </location>
</feature>
<feature type="sequence conflict" description="In Ref. 3; AAA62656." evidence="4" ref="3">
    <original>E</original>
    <variation>A</variation>
    <location>
        <position position="28"/>
    </location>
</feature>
<feature type="sequence conflict" description="In Ref. 1; AAB58883." evidence="4" ref="1">
    <original>D</original>
    <variation>E</variation>
    <location>
        <position position="506"/>
    </location>
</feature>
<dbReference type="EC" id="4.1.1.31"/>
<dbReference type="EMBL" id="U72662">
    <property type="protein sequence ID" value="AAB58883.2"/>
    <property type="molecule type" value="Genomic_DNA"/>
</dbReference>
<dbReference type="EMBL" id="CP001510">
    <property type="protein sequence ID" value="ACS39576.1"/>
    <property type="molecule type" value="Genomic_DNA"/>
</dbReference>
<dbReference type="EMBL" id="L33465">
    <property type="protein sequence ID" value="AAA62656.1"/>
    <property type="molecule type" value="Genomic_DNA"/>
</dbReference>
<dbReference type="PIR" id="D55230">
    <property type="entry name" value="D55230"/>
</dbReference>
<dbReference type="RefSeq" id="WP_003597630.1">
    <property type="nucleotide sequence ID" value="NC_012808.1"/>
</dbReference>
<dbReference type="SMR" id="Q49136"/>
<dbReference type="STRING" id="272630.MexAM1_META1p1732"/>
<dbReference type="KEGG" id="mea:Mex_1p1732"/>
<dbReference type="eggNOG" id="COG2352">
    <property type="taxonomic scope" value="Bacteria"/>
</dbReference>
<dbReference type="HOGENOM" id="CLU_006557_2_0_5"/>
<dbReference type="OrthoDB" id="9768133at2"/>
<dbReference type="BioCyc" id="MetaCyc:MONOMER-3824"/>
<dbReference type="Proteomes" id="UP000009081">
    <property type="component" value="Chromosome"/>
</dbReference>
<dbReference type="GO" id="GO:0005829">
    <property type="term" value="C:cytosol"/>
    <property type="evidence" value="ECO:0007669"/>
    <property type="project" value="TreeGrafter"/>
</dbReference>
<dbReference type="GO" id="GO:0000287">
    <property type="term" value="F:magnesium ion binding"/>
    <property type="evidence" value="ECO:0007669"/>
    <property type="project" value="UniProtKB-UniRule"/>
</dbReference>
<dbReference type="GO" id="GO:0008964">
    <property type="term" value="F:phosphoenolpyruvate carboxylase activity"/>
    <property type="evidence" value="ECO:0007669"/>
    <property type="project" value="UniProtKB-UniRule"/>
</dbReference>
<dbReference type="GO" id="GO:0015977">
    <property type="term" value="P:carbon fixation"/>
    <property type="evidence" value="ECO:0007669"/>
    <property type="project" value="UniProtKB-UniRule"/>
</dbReference>
<dbReference type="GO" id="GO:0006107">
    <property type="term" value="P:oxaloacetate metabolic process"/>
    <property type="evidence" value="ECO:0007669"/>
    <property type="project" value="UniProtKB-UniRule"/>
</dbReference>
<dbReference type="GO" id="GO:0006099">
    <property type="term" value="P:tricarboxylic acid cycle"/>
    <property type="evidence" value="ECO:0007669"/>
    <property type="project" value="InterPro"/>
</dbReference>
<dbReference type="Gene3D" id="1.20.1440.90">
    <property type="entry name" value="Phosphoenolpyruvate/pyruvate domain"/>
    <property type="match status" value="1"/>
</dbReference>
<dbReference type="InterPro" id="IPR021135">
    <property type="entry name" value="PEP_COase"/>
</dbReference>
<dbReference type="InterPro" id="IPR022805">
    <property type="entry name" value="PEP_COase_bac/pln-type"/>
</dbReference>
<dbReference type="InterPro" id="IPR033129">
    <property type="entry name" value="PEPCASE_His_AS"/>
</dbReference>
<dbReference type="InterPro" id="IPR015813">
    <property type="entry name" value="Pyrv/PenolPyrv_kinase-like_dom"/>
</dbReference>
<dbReference type="PANTHER" id="PTHR30523">
    <property type="entry name" value="PHOSPHOENOLPYRUVATE CARBOXYLASE"/>
    <property type="match status" value="1"/>
</dbReference>
<dbReference type="PANTHER" id="PTHR30523:SF32">
    <property type="entry name" value="PHOSPHOENOLPYRUVATE CARBOXYLASE"/>
    <property type="match status" value="1"/>
</dbReference>
<dbReference type="Pfam" id="PF00311">
    <property type="entry name" value="PEPcase"/>
    <property type="match status" value="1"/>
</dbReference>
<dbReference type="PRINTS" id="PR00150">
    <property type="entry name" value="PEPCARBXLASE"/>
</dbReference>
<dbReference type="SUPFAM" id="SSF51621">
    <property type="entry name" value="Phosphoenolpyruvate/pyruvate domain"/>
    <property type="match status" value="1"/>
</dbReference>
<dbReference type="PROSITE" id="PS00393">
    <property type="entry name" value="PEPCASE_2"/>
    <property type="match status" value="1"/>
</dbReference>
<proteinExistence type="inferred from homology"/>
<organism>
    <name type="scientific">Methylorubrum extorquens (strain ATCC 14718 / DSM 1338 / JCM 2805 / NCIMB 9133 / AM1)</name>
    <name type="common">Methylobacterium extorquens</name>
    <dbReference type="NCBI Taxonomy" id="272630"/>
    <lineage>
        <taxon>Bacteria</taxon>
        <taxon>Pseudomonadati</taxon>
        <taxon>Pseudomonadota</taxon>
        <taxon>Alphaproteobacteria</taxon>
        <taxon>Hyphomicrobiales</taxon>
        <taxon>Methylobacteriaceae</taxon>
        <taxon>Methylorubrum</taxon>
    </lineage>
</organism>
<comment type="function">
    <text evidence="1">Forms oxaloacetate, a four-carbon dicarboxylic acid source for the tricarboxylic acid cycle.</text>
</comment>
<comment type="catalytic activity">
    <reaction>
        <text>oxaloacetate + phosphate = phosphoenolpyruvate + hydrogencarbonate</text>
        <dbReference type="Rhea" id="RHEA:28370"/>
        <dbReference type="ChEBI" id="CHEBI:16452"/>
        <dbReference type="ChEBI" id="CHEBI:17544"/>
        <dbReference type="ChEBI" id="CHEBI:43474"/>
        <dbReference type="ChEBI" id="CHEBI:58702"/>
        <dbReference type="EC" id="4.1.1.31"/>
    </reaction>
</comment>
<comment type="cofactor">
    <cofactor evidence="1">
        <name>Mg(2+)</name>
        <dbReference type="ChEBI" id="CHEBI:18420"/>
    </cofactor>
</comment>
<comment type="similarity">
    <text evidence="4">Belongs to the PEPCase type 1 family.</text>
</comment>
<name>CAPP_METEA</name>
<keyword id="KW-0120">Carbon dioxide fixation</keyword>
<keyword id="KW-0456">Lyase</keyword>
<keyword id="KW-0460">Magnesium</keyword>
<keyword id="KW-1185">Reference proteome</keyword>
<reference key="1">
    <citation type="journal article" date="1997" name="Microbiology">
        <title>Molecular and mutational analysis of a DNA region separating two methylotrophy gene clusters in Methylobacterium extorquens AM1.</title>
        <authorList>
            <person name="Chistoserdova L.V."/>
            <person name="Lidstrom M.E."/>
        </authorList>
    </citation>
    <scope>NUCLEOTIDE SEQUENCE [GENOMIC DNA]</scope>
</reference>
<reference key="2">
    <citation type="journal article" date="2009" name="PLoS ONE">
        <title>Methylobacterium genome sequences: a reference blueprint to investigate microbial metabolism of C1 compounds from natural and industrial sources.</title>
        <authorList>
            <person name="Vuilleumier S."/>
            <person name="Chistoserdova L."/>
            <person name="Lee M.-C."/>
            <person name="Bringel F."/>
            <person name="Lajus A."/>
            <person name="Zhou Y."/>
            <person name="Gourion B."/>
            <person name="Barbe V."/>
            <person name="Chang J."/>
            <person name="Cruveiller S."/>
            <person name="Dossat C."/>
            <person name="Gillett W."/>
            <person name="Gruffaz C."/>
            <person name="Haugen E."/>
            <person name="Hourcade E."/>
            <person name="Levy R."/>
            <person name="Mangenot S."/>
            <person name="Muller E."/>
            <person name="Nadalig T."/>
            <person name="Pagni M."/>
            <person name="Penny C."/>
            <person name="Peyraud R."/>
            <person name="Robinson D.G."/>
            <person name="Roche D."/>
            <person name="Rouy Z."/>
            <person name="Saenampechek C."/>
            <person name="Salvignol G."/>
            <person name="Vallenet D."/>
            <person name="Wu Z."/>
            <person name="Marx C.J."/>
            <person name="Vorholt J.A."/>
            <person name="Olson M.V."/>
            <person name="Kaul R."/>
            <person name="Weissenbach J."/>
            <person name="Medigue C."/>
            <person name="Lidstrom M.E."/>
        </authorList>
    </citation>
    <scope>NUCLEOTIDE SEQUENCE [LARGE SCALE GENOMIC DNA]</scope>
    <source>
        <strain>ATCC 14718 / DSM 1338 / JCM 2805 / NCIMB 9133 / AM1</strain>
    </source>
</reference>
<reference key="3">
    <citation type="journal article" date="1994" name="J. Bacteriol.">
        <title>Genetics of the serine cycle in Methylobacterium extorquens AM1: identification, sequence, and mutation of three new genes involved in C1 assimilation, orf4, mtkA, and mtkB.</title>
        <authorList>
            <person name="Chistoserdova L.V."/>
            <person name="Lidstrom M.E."/>
        </authorList>
    </citation>
    <scope>NUCLEOTIDE SEQUENCE [GENOMIC DNA] OF 1-32</scope>
</reference>
<evidence type="ECO:0000250" key="1"/>
<evidence type="ECO:0000255" key="2">
    <source>
        <dbReference type="PROSITE-ProRule" id="PRU10112"/>
    </source>
</evidence>
<evidence type="ECO:0000256" key="3">
    <source>
        <dbReference type="SAM" id="MobiDB-lite"/>
    </source>
</evidence>
<evidence type="ECO:0000305" key="4"/>
<accession>Q49136</accession>
<accession>C5B112</accession>
<accession>P71502</accession>
<sequence length="922" mass="103021">MTKTLHARPSAATDTTFAPPVITGTATEDALEILFHALLDVARRHDPELEDVLHGRADISSFTPEMLARALQVQGIWFQLVSIAEQNAAMRRRRHVERDQGREALNGSFAKVLAEASARGIGPQQIHALLKDLRIRPTITAHPTEGKRVTVLEKLRRIYLVLRELELPRWTERERNGLMNELRDQIELIWMTGELHLEKATVEREVAWGLHFFDETLFEMLPEMLLSLEESLAQYYPDETFEVPPFFQFGSWIGGDRDGNPYVTASVTRETLQRNALASLRRYRDGITHLGRVLSITERSLPVPETFRSELAHMLAESGDARAIANRNPGEAYRQFLSCVLRKLEATIARNKGARSVGPDYPSADGLINDLRTLEKGLADAKCGALATDIVRPVRRMVEIFRFSTVRLDLRENSTRTTKTLHALWKLRNGDREPPALDSPAWKDWLLTELARPRTPETSFEDFADRLPDDARETLATFALVGEMRDTLDREAFGAFILSMTRSTVDVLGAYLLAKEAGIFLDTTGTEICPLPIVPLFETIDDLRAAPAIMKELLGIPVVRRSTRWQGGVQEVMIGYSDSNKDGGFIASNWELYKAQVRLTTLGNHLGVPIAFFHGRGGSVSRGGVPTHRGIAAQPPGSIQGRFRITEQGEVVSFKYANRGTAAYQMELLAASVFEHALLSEGNGNGSRAEFDDALEALSGASRAAYVNLLQAEGLVDYFQAASPLDEISLLNIGSRPARRFGAKSLSDLRAIPWVFAWSQNRHVITGWYGVGSGLKSFIDVRGEAGEALLRRLFRDCRVFRLVLDEVEKTLLMVDLEIARDYAGLVEDAGIRARIFGMIEAEYALTREMVLRVSGDSELAQRFPQFSERLRGRLPTINQVSREQVELLRRYRSETDEDKREAVKSALLLSINCIAVGFGATG</sequence>
<protein>
    <recommendedName>
        <fullName>Phosphoenolpyruvate carboxylase</fullName>
        <shortName>PEPC</shortName>
        <shortName>PEPCase</shortName>
        <ecNumber>4.1.1.31</ecNumber>
    </recommendedName>
</protein>